<keyword id="KW-0128">Catecholamine metabolism</keyword>
<keyword id="KW-0186">Copper</keyword>
<keyword id="KW-0903">Direct protein sequencing</keyword>
<keyword id="KW-0464">Manganese</keyword>
<keyword id="KW-0479">Metal-binding</keyword>
<keyword id="KW-0560">Oxidoreductase</keyword>
<keyword id="KW-0574">Periplasm</keyword>
<keyword id="KW-0732">Signal</keyword>
<keyword id="KW-0801">TPQ</keyword>
<protein>
    <recommendedName>
        <fullName>Primary amine oxidase</fullName>
        <ecNumber evidence="2">1.4.3.21</ecNumber>
    </recommendedName>
    <alternativeName>
        <fullName>Copper amine oxidase</fullName>
    </alternativeName>
    <alternativeName>
        <fullName>Monamine oxidase</fullName>
    </alternativeName>
    <alternativeName>
        <fullName>Tyramine oxidase</fullName>
    </alternativeName>
</protein>
<organism>
    <name type="scientific">Klebsiella aerogenes</name>
    <name type="common">Enterobacter aerogenes</name>
    <dbReference type="NCBI Taxonomy" id="548"/>
    <lineage>
        <taxon>Bacteria</taxon>
        <taxon>Pseudomonadati</taxon>
        <taxon>Pseudomonadota</taxon>
        <taxon>Gammaproteobacteria</taxon>
        <taxon>Enterobacterales</taxon>
        <taxon>Enterobacteriaceae</taxon>
        <taxon>Klebsiella/Raoultella group</taxon>
        <taxon>Klebsiella</taxon>
    </lineage>
</organism>
<sequence>MANGLKFSPRKTALALAVAVVCAWQSPVFAHGSEAHMVPLDKTLQEFGADVQWDDYAQMFTLIKDGAYVKVKPGAKTAIVNGKSLDLPVPVVMKEGKAWVSDTFINDVFQSGLDQTFQVEKRPHPLNSLSAAEISKAVTIVKAAPEFQPNTRFTEISLHEPDKAAVWAFALQGTPVDAPRTADVVMLDGKHVIEAVVDLQNKKILSWTPIKGAHGMVLLDDFVSVQNIINTSSEFAEVLKKHGITDPGKVVTTPLTVGFFDGKDGLQQDARLLKVVSYLDTGDGNYWAHPIENLVAVVDLEAKKIIKIEEGPVIPVPMEPRPYDGRDRNAPAVKPLEITEPEGKNYTITGDTIHWQNWDFHLRLNSRVGPILSTVTYNDNGTKRQVMYEGSLGGMIVPYGDPDVGWYFKAYLDSGDYGMGTLTSPIVRGKDAPSNAVLLDETIADYTGKPTTIPGAVAIFERYAGPEYKHLEMGKPNVSTERRELVVRWISTVGNYDYIFDWVFHDNGTIGIDAGATGIEAVKGVLAKTMHDPSAKEDTRYGTLIDHNIVGTTHQHIYNFRLDLDVDGENNTLVAMDPEVKPNTAGGPRTSTMQVNQYTIDSEQKAAQKFDPGTIRLLSNTSKENRMGNPVSYQIIPYAGGTHPAATGAKFAPDEWIYHRLSFMDKQLWVTRYHPTERYPEGKYPNRSAHDTGLGQYAKDDESLTNHDDVVWITTGTTHVARAEEWPIMPTEWALALLKPWNFFDETPTLGEKKK</sequence>
<feature type="signal peptide" evidence="4">
    <location>
        <begin position="1"/>
        <end position="30"/>
    </location>
</feature>
<feature type="chain" id="PRO_0000035674" description="Primary amine oxidase">
    <location>
        <begin position="31"/>
        <end position="755"/>
    </location>
</feature>
<feature type="active site" description="Proton acceptor" evidence="1">
    <location>
        <position position="413"/>
    </location>
</feature>
<feature type="active site" description="Schiff-base intermediate with substrate; via topaquinone" evidence="1">
    <location>
        <position position="496"/>
    </location>
</feature>
<feature type="binding site" evidence="1">
    <location>
        <begin position="411"/>
        <end position="422"/>
    </location>
    <ligand>
        <name>substrate</name>
    </ligand>
</feature>
<feature type="binding site" evidence="2">
    <location>
        <begin position="493"/>
        <end position="498"/>
    </location>
    <ligand>
        <name>substrate</name>
    </ligand>
</feature>
<feature type="binding site" evidence="1">
    <location>
        <position position="554"/>
    </location>
    <ligand>
        <name>Cu cation</name>
        <dbReference type="ChEBI" id="CHEBI:23378"/>
    </ligand>
</feature>
<feature type="binding site" evidence="1">
    <location>
        <position position="556"/>
    </location>
    <ligand>
        <name>Cu cation</name>
        <dbReference type="ChEBI" id="CHEBI:23378"/>
    </ligand>
</feature>
<feature type="binding site" evidence="2">
    <location>
        <position position="563"/>
    </location>
    <ligand>
        <name>Ca(2+)</name>
        <dbReference type="ChEBI" id="CHEBI:29108"/>
        <label>1</label>
    </ligand>
</feature>
<feature type="binding site" evidence="3">
    <location>
        <position position="563"/>
    </location>
    <ligand>
        <name>Mn(2+)</name>
        <dbReference type="ChEBI" id="CHEBI:29035"/>
    </ligand>
</feature>
<feature type="binding site" evidence="2">
    <location>
        <position position="564"/>
    </location>
    <ligand>
        <name>Ca(2+)</name>
        <dbReference type="ChEBI" id="CHEBI:29108"/>
        <label>1</label>
    </ligand>
</feature>
<feature type="binding site" evidence="2">
    <location>
        <position position="565"/>
    </location>
    <ligand>
        <name>Ca(2+)</name>
        <dbReference type="ChEBI" id="CHEBI:29108"/>
        <label>1</label>
    </ligand>
</feature>
<feature type="binding site" evidence="3">
    <location>
        <position position="565"/>
    </location>
    <ligand>
        <name>Mn(2+)</name>
        <dbReference type="ChEBI" id="CHEBI:29035"/>
    </ligand>
</feature>
<feature type="binding site" evidence="2">
    <location>
        <position position="603"/>
    </location>
    <ligand>
        <name>Ca(2+)</name>
        <dbReference type="ChEBI" id="CHEBI:29108"/>
        <label>2</label>
    </ligand>
</feature>
<feature type="binding site" evidence="2">
    <location>
        <position position="697"/>
    </location>
    <ligand>
        <name>Ca(2+)</name>
        <dbReference type="ChEBI" id="CHEBI:29108"/>
        <label>2</label>
    </ligand>
</feature>
<feature type="binding site" evidence="2">
    <location>
        <position position="700"/>
    </location>
    <ligand>
        <name>Ca(2+)</name>
        <dbReference type="ChEBI" id="CHEBI:29108"/>
        <label>2</label>
    </ligand>
</feature>
<feature type="binding site" evidence="2">
    <location>
        <position position="702"/>
    </location>
    <ligand>
        <name>Ca(2+)</name>
        <dbReference type="ChEBI" id="CHEBI:29108"/>
        <label>2</label>
    </ligand>
</feature>
<feature type="binding site" evidence="2">
    <location>
        <position position="708"/>
    </location>
    <ligand>
        <name>Ca(2+)</name>
        <dbReference type="ChEBI" id="CHEBI:29108"/>
        <label>1</label>
    </ligand>
</feature>
<feature type="binding site" evidence="3">
    <location>
        <position position="708"/>
    </location>
    <ligand>
        <name>Mn(2+)</name>
        <dbReference type="ChEBI" id="CHEBI:29035"/>
    </ligand>
</feature>
<feature type="binding site" evidence="1">
    <location>
        <position position="719"/>
    </location>
    <ligand>
        <name>Cu cation</name>
        <dbReference type="ChEBI" id="CHEBI:23378"/>
    </ligand>
</feature>
<feature type="modified residue" description="2',4',5'-topaquinone" evidence="1">
    <location>
        <position position="496"/>
    </location>
</feature>
<accession>P49250</accession>
<evidence type="ECO:0000250" key="1">
    <source>
        <dbReference type="UniProtKB" id="P12807"/>
    </source>
</evidence>
<evidence type="ECO:0000250" key="2">
    <source>
        <dbReference type="UniProtKB" id="P46883"/>
    </source>
</evidence>
<evidence type="ECO:0000250" key="3">
    <source>
        <dbReference type="UniProtKB" id="Q43077"/>
    </source>
</evidence>
<evidence type="ECO:0000269" key="4">
    <source>
    </source>
</evidence>
<evidence type="ECO:0000305" key="5"/>
<proteinExistence type="evidence at protein level"/>
<reference key="1">
    <citation type="journal article" date="1992" name="J. Bacteriol.">
        <title>A monoamine-regulated Klebsiella aerogenes operon containing the monoamine oxidase structural gene (maoA) and the maoC gene.</title>
        <authorList>
            <person name="Sugino H."/>
            <person name="Sasaki M."/>
            <person name="Azakami H."/>
            <person name="Yamashita M."/>
            <person name="Murooka Y."/>
        </authorList>
    </citation>
    <scope>NUCLEOTIDE SEQUENCE [GENOMIC DNA]</scope>
    <scope>PROTEIN SEQUENCE OF 31-41</scope>
    <source>
        <strain>W70</strain>
    </source>
</reference>
<dbReference type="EC" id="1.4.3.21" evidence="2"/>
<dbReference type="EMBL" id="D10208">
    <property type="protein sequence ID" value="BAA01060.1"/>
    <property type="molecule type" value="Genomic_DNA"/>
</dbReference>
<dbReference type="SMR" id="P49250"/>
<dbReference type="STRING" id="548.EAG7_01320"/>
<dbReference type="GO" id="GO:0042597">
    <property type="term" value="C:periplasmic space"/>
    <property type="evidence" value="ECO:0007669"/>
    <property type="project" value="UniProtKB-SubCell"/>
</dbReference>
<dbReference type="GO" id="GO:0005507">
    <property type="term" value="F:copper ion binding"/>
    <property type="evidence" value="ECO:0007669"/>
    <property type="project" value="InterPro"/>
</dbReference>
<dbReference type="GO" id="GO:0008131">
    <property type="term" value="F:primary methylamine oxidase activity"/>
    <property type="evidence" value="ECO:0007669"/>
    <property type="project" value="UniProtKB-EC"/>
</dbReference>
<dbReference type="GO" id="GO:0048038">
    <property type="term" value="F:quinone binding"/>
    <property type="evidence" value="ECO:0007669"/>
    <property type="project" value="InterPro"/>
</dbReference>
<dbReference type="GO" id="GO:0006584">
    <property type="term" value="P:catecholamine metabolic process"/>
    <property type="evidence" value="ECO:0007669"/>
    <property type="project" value="UniProtKB-KW"/>
</dbReference>
<dbReference type="FunFam" id="3.10.450.40:FF:000025">
    <property type="entry name" value="Primary amine oxidase"/>
    <property type="match status" value="1"/>
</dbReference>
<dbReference type="Gene3D" id="3.10.450.40">
    <property type="match status" value="2"/>
</dbReference>
<dbReference type="Gene3D" id="2.70.98.20">
    <property type="entry name" value="Copper amine oxidase, catalytic domain"/>
    <property type="match status" value="1"/>
</dbReference>
<dbReference type="Gene3D" id="3.30.457.10">
    <property type="entry name" value="Copper amine oxidase-like, N-terminal domain"/>
    <property type="match status" value="1"/>
</dbReference>
<dbReference type="InterPro" id="IPR049947">
    <property type="entry name" value="Cu_Am_Ox_Cu-bd"/>
</dbReference>
<dbReference type="InterPro" id="IPR049948">
    <property type="entry name" value="Cu_Am_ox_TPQ-bd"/>
</dbReference>
<dbReference type="InterPro" id="IPR000269">
    <property type="entry name" value="Cu_amine_oxidase"/>
</dbReference>
<dbReference type="InterPro" id="IPR012854">
    <property type="entry name" value="Cu_amine_oxidase-like_N"/>
</dbReference>
<dbReference type="InterPro" id="IPR015798">
    <property type="entry name" value="Cu_amine_oxidase_C"/>
</dbReference>
<dbReference type="InterPro" id="IPR036460">
    <property type="entry name" value="Cu_amine_oxidase_C_sf"/>
</dbReference>
<dbReference type="InterPro" id="IPR016182">
    <property type="entry name" value="Cu_amine_oxidase_N-reg"/>
</dbReference>
<dbReference type="InterPro" id="IPR015800">
    <property type="entry name" value="Cu_amine_oxidase_N2"/>
</dbReference>
<dbReference type="InterPro" id="IPR015802">
    <property type="entry name" value="Cu_amine_oxidase_N3"/>
</dbReference>
<dbReference type="InterPro" id="IPR036582">
    <property type="entry name" value="Mao_N_sf"/>
</dbReference>
<dbReference type="NCBIfam" id="NF011285">
    <property type="entry name" value="PRK14696.1"/>
    <property type="match status" value="1"/>
</dbReference>
<dbReference type="PANTHER" id="PTHR10638:SF41">
    <property type="entry name" value="AMINE OXIDASE"/>
    <property type="match status" value="1"/>
</dbReference>
<dbReference type="PANTHER" id="PTHR10638">
    <property type="entry name" value="COPPER AMINE OXIDASE"/>
    <property type="match status" value="1"/>
</dbReference>
<dbReference type="Pfam" id="PF01179">
    <property type="entry name" value="Cu_amine_oxid"/>
    <property type="match status" value="1"/>
</dbReference>
<dbReference type="Pfam" id="PF07833">
    <property type="entry name" value="Cu_amine_oxidN1"/>
    <property type="match status" value="1"/>
</dbReference>
<dbReference type="Pfam" id="PF02727">
    <property type="entry name" value="Cu_amine_oxidN2"/>
    <property type="match status" value="1"/>
</dbReference>
<dbReference type="Pfam" id="PF02728">
    <property type="entry name" value="Cu_amine_oxidN3"/>
    <property type="match status" value="1"/>
</dbReference>
<dbReference type="SUPFAM" id="SSF49998">
    <property type="entry name" value="Amine oxidase catalytic domain"/>
    <property type="match status" value="1"/>
</dbReference>
<dbReference type="SUPFAM" id="SSF54416">
    <property type="entry name" value="Amine oxidase N-terminal region"/>
    <property type="match status" value="2"/>
</dbReference>
<dbReference type="SUPFAM" id="SSF55383">
    <property type="entry name" value="Copper amine oxidase, domain N"/>
    <property type="match status" value="1"/>
</dbReference>
<dbReference type="PROSITE" id="PS01164">
    <property type="entry name" value="COPPER_AMINE_OXID_1"/>
    <property type="match status" value="1"/>
</dbReference>
<dbReference type="PROSITE" id="PS01165">
    <property type="entry name" value="COPPER_AMINE_OXID_2"/>
    <property type="match status" value="1"/>
</dbReference>
<name>AMO_KLEAE</name>
<gene>
    <name type="primary">maoA</name>
    <name type="synonym">tynA</name>
</gene>
<comment type="function">
    <text>Active on tyramine, tryptamine, beta-phenethylamine and dopamine.</text>
</comment>
<comment type="catalytic activity">
    <reaction evidence="2">
        <text>a primary methyl amine + O2 + H2O = an aldehyde + H2O2 + NH4(+)</text>
        <dbReference type="Rhea" id="RHEA:16153"/>
        <dbReference type="ChEBI" id="CHEBI:15377"/>
        <dbReference type="ChEBI" id="CHEBI:15379"/>
        <dbReference type="ChEBI" id="CHEBI:16240"/>
        <dbReference type="ChEBI" id="CHEBI:17478"/>
        <dbReference type="ChEBI" id="CHEBI:28938"/>
        <dbReference type="ChEBI" id="CHEBI:228804"/>
        <dbReference type="EC" id="1.4.3.21"/>
    </reaction>
</comment>
<comment type="cofactor">
    <cofactor evidence="2">
        <name>Cu cation</name>
        <dbReference type="ChEBI" id="CHEBI:23378"/>
    </cofactor>
    <cofactor evidence="1">
        <name>Zn(2+)</name>
        <dbReference type="ChEBI" id="CHEBI:29105"/>
    </cofactor>
    <text evidence="1 2">Binds 1 copper ion per subunit (By similarity). Can also use zinc ion as cofactor (By similarity).</text>
</comment>
<comment type="cofactor">
    <cofactor evidence="2">
        <name>Ca(2+)</name>
        <dbReference type="ChEBI" id="CHEBI:29108"/>
    </cofactor>
    <text evidence="2">Binds 2 calcium ions per subunit.</text>
</comment>
<comment type="cofactor">
    <cofactor evidence="2">
        <name>L-topaquinone</name>
        <dbReference type="ChEBI" id="CHEBI:79027"/>
    </cofactor>
    <text evidence="2">Contains 1 topaquinone per subunit.</text>
</comment>
<comment type="cofactor">
    <cofactor evidence="3">
        <name>Mn(2+)</name>
        <dbReference type="ChEBI" id="CHEBI:29035"/>
    </cofactor>
    <text evidence="3">Binds 1 Mn(2+) ion per subunit.</text>
</comment>
<comment type="subunit">
    <text evidence="2">Homodimer.</text>
</comment>
<comment type="subcellular location">
    <subcellularLocation>
        <location>Periplasm</location>
    </subcellularLocation>
</comment>
<comment type="induction">
    <text>By tyramine and catecholamines.</text>
</comment>
<comment type="PTM">
    <text evidence="2">Topaquinone (TPQ) is generated by copper-dependent autoxidation of a specific tyrosyl residue.</text>
</comment>
<comment type="similarity">
    <text evidence="5">Belongs to the copper/topaquinone oxidase family.</text>
</comment>